<name>TRAB4_ECOLX</name>
<proteinExistence type="evidence at protein level"/>
<protein>
    <recommendedName>
        <fullName>Protein TraB</fullName>
    </recommendedName>
</protein>
<reference key="1">
    <citation type="journal article" date="1991" name="DNA Seq.">
        <title>Gene organization and nucleotide sequence of the primase region of IncP plasmids RP4 and R751.</title>
        <authorList>
            <person name="Miele L."/>
            <person name="Strack B."/>
            <person name="Kruft V."/>
            <person name="Lanka E."/>
        </authorList>
    </citation>
    <scope>NUCLEOTIDE SEQUENCE [GENOMIC DNA]</scope>
    <scope>PROTEIN SEQUENCE OF 1-9</scope>
    <source>
        <strain>ATCC 33694 / HB101</strain>
    </source>
</reference>
<feature type="chain" id="PRO_0000068593" description="Protein TraB">
    <location>
        <begin position="1"/>
        <end position="146"/>
    </location>
</feature>
<geneLocation type="plasmid">
    <name>IncP-alpha RP4</name>
</geneLocation>
<keyword id="KW-0903">Direct protein sequencing</keyword>
<keyword id="KW-0614">Plasmid</keyword>
<gene>
    <name type="primary">traB</name>
</gene>
<accession>P27188</accession>
<sequence length="146" mass="15844">MNKVQIGAPRTSASPGVIMKPEGSVKIAVMNGSRQVDQVVNGEWLTMKVLPEAGLPKGIHQLSDAKDASKNVHPHKHVGQVLHDDGRNVYQFSEGGIVKHSRGIFEKPPVVGKNYEIAYSRGQGKVIGEVSQEQAAKAEQKRSRSI</sequence>
<organism>
    <name type="scientific">Escherichia coli</name>
    <dbReference type="NCBI Taxonomy" id="562"/>
    <lineage>
        <taxon>Bacteria</taxon>
        <taxon>Pseudomonadati</taxon>
        <taxon>Pseudomonadota</taxon>
        <taxon>Gammaproteobacteria</taxon>
        <taxon>Enterobacterales</taxon>
        <taxon>Enterobacteriaceae</taxon>
        <taxon>Escherichia</taxon>
    </lineage>
</organism>
<dbReference type="EMBL" id="X59793">
    <property type="protein sequence ID" value="CAA42457.1"/>
    <property type="molecule type" value="Genomic_DNA"/>
</dbReference>
<dbReference type="PIR" id="S37666">
    <property type="entry name" value="S37666"/>
</dbReference>
<dbReference type="RefSeq" id="WP_011205812.1">
    <property type="nucleotide sequence ID" value="NZ_VMTS01000048.1"/>
</dbReference>
<dbReference type="SMR" id="P27188"/>
<dbReference type="InterPro" id="IPR040782">
    <property type="entry name" value="KfrB"/>
</dbReference>
<dbReference type="Pfam" id="PF18790">
    <property type="entry name" value="KfrB"/>
    <property type="match status" value="1"/>
</dbReference>